<dbReference type="EC" id="4.6.1.12" evidence="1"/>
<dbReference type="EMBL" id="CP000089">
    <property type="protein sequence ID" value="AAZ46720.1"/>
    <property type="molecule type" value="Genomic_DNA"/>
</dbReference>
<dbReference type="SMR" id="Q47EL1"/>
<dbReference type="STRING" id="159087.Daro_1974"/>
<dbReference type="KEGG" id="dar:Daro_1974"/>
<dbReference type="eggNOG" id="COG0245">
    <property type="taxonomic scope" value="Bacteria"/>
</dbReference>
<dbReference type="HOGENOM" id="CLU_084630_2_0_4"/>
<dbReference type="OrthoDB" id="9804336at2"/>
<dbReference type="UniPathway" id="UPA00056">
    <property type="reaction ID" value="UER00095"/>
</dbReference>
<dbReference type="GO" id="GO:0008685">
    <property type="term" value="F:2-C-methyl-D-erythritol 2,4-cyclodiphosphate synthase activity"/>
    <property type="evidence" value="ECO:0007669"/>
    <property type="project" value="UniProtKB-UniRule"/>
</dbReference>
<dbReference type="GO" id="GO:0046872">
    <property type="term" value="F:metal ion binding"/>
    <property type="evidence" value="ECO:0007669"/>
    <property type="project" value="UniProtKB-KW"/>
</dbReference>
<dbReference type="GO" id="GO:0019288">
    <property type="term" value="P:isopentenyl diphosphate biosynthetic process, methylerythritol 4-phosphate pathway"/>
    <property type="evidence" value="ECO:0007669"/>
    <property type="project" value="UniProtKB-UniRule"/>
</dbReference>
<dbReference type="GO" id="GO:0016114">
    <property type="term" value="P:terpenoid biosynthetic process"/>
    <property type="evidence" value="ECO:0007669"/>
    <property type="project" value="InterPro"/>
</dbReference>
<dbReference type="CDD" id="cd00554">
    <property type="entry name" value="MECDP_synthase"/>
    <property type="match status" value="1"/>
</dbReference>
<dbReference type="FunFam" id="3.30.1330.50:FF:000001">
    <property type="entry name" value="2-C-methyl-D-erythritol 2,4-cyclodiphosphate synthase"/>
    <property type="match status" value="1"/>
</dbReference>
<dbReference type="Gene3D" id="3.30.1330.50">
    <property type="entry name" value="2-C-methyl-D-erythritol 2,4-cyclodiphosphate synthase"/>
    <property type="match status" value="1"/>
</dbReference>
<dbReference type="HAMAP" id="MF_00107">
    <property type="entry name" value="IspF"/>
    <property type="match status" value="1"/>
</dbReference>
<dbReference type="InterPro" id="IPR003526">
    <property type="entry name" value="MECDP_synthase"/>
</dbReference>
<dbReference type="InterPro" id="IPR020555">
    <property type="entry name" value="MECDP_synthase_CS"/>
</dbReference>
<dbReference type="InterPro" id="IPR036571">
    <property type="entry name" value="MECDP_synthase_sf"/>
</dbReference>
<dbReference type="NCBIfam" id="TIGR00151">
    <property type="entry name" value="ispF"/>
    <property type="match status" value="1"/>
</dbReference>
<dbReference type="PANTHER" id="PTHR43181">
    <property type="entry name" value="2-C-METHYL-D-ERYTHRITOL 2,4-CYCLODIPHOSPHATE SYNTHASE, CHLOROPLASTIC"/>
    <property type="match status" value="1"/>
</dbReference>
<dbReference type="PANTHER" id="PTHR43181:SF1">
    <property type="entry name" value="2-C-METHYL-D-ERYTHRITOL 2,4-CYCLODIPHOSPHATE SYNTHASE, CHLOROPLASTIC"/>
    <property type="match status" value="1"/>
</dbReference>
<dbReference type="Pfam" id="PF02542">
    <property type="entry name" value="YgbB"/>
    <property type="match status" value="1"/>
</dbReference>
<dbReference type="SUPFAM" id="SSF69765">
    <property type="entry name" value="IpsF-like"/>
    <property type="match status" value="1"/>
</dbReference>
<dbReference type="PROSITE" id="PS01350">
    <property type="entry name" value="ISPF"/>
    <property type="match status" value="1"/>
</dbReference>
<organism>
    <name type="scientific">Dechloromonas aromatica (strain RCB)</name>
    <dbReference type="NCBI Taxonomy" id="159087"/>
    <lineage>
        <taxon>Bacteria</taxon>
        <taxon>Pseudomonadati</taxon>
        <taxon>Pseudomonadota</taxon>
        <taxon>Betaproteobacteria</taxon>
        <taxon>Rhodocyclales</taxon>
        <taxon>Azonexaceae</taxon>
        <taxon>Dechloromonas</taxon>
    </lineage>
</organism>
<proteinExistence type="inferred from homology"/>
<sequence length="160" mass="16934">MNFRVGQGYDVHKLVDGRKLILGGVEIPHPTGLLGHSDADALLHAITDALLGAVALGDIGRHFPDTDPRYKGADSRVLLRAAVALLAERGWRPVNVDATLIAQQPKLAPHAVAMVANVAADLGISPDCVNIKGKTNERLGYLGREEAIEAQAVALVERVG</sequence>
<name>ISPF_DECAR</name>
<keyword id="KW-0414">Isoprene biosynthesis</keyword>
<keyword id="KW-0456">Lyase</keyword>
<keyword id="KW-0479">Metal-binding</keyword>
<accession>Q47EL1</accession>
<gene>
    <name evidence="1" type="primary">ispF</name>
    <name type="ordered locus">Daro_1974</name>
</gene>
<feature type="chain" id="PRO_0000237719" description="2-C-methyl-D-erythritol 2,4-cyclodiphosphate synthase">
    <location>
        <begin position="1"/>
        <end position="160"/>
    </location>
</feature>
<feature type="binding site" evidence="1">
    <location>
        <begin position="10"/>
        <end position="12"/>
    </location>
    <ligand>
        <name>4-CDP-2-C-methyl-D-erythritol 2-phosphate</name>
        <dbReference type="ChEBI" id="CHEBI:57919"/>
    </ligand>
</feature>
<feature type="binding site" evidence="1">
    <location>
        <position position="10"/>
    </location>
    <ligand>
        <name>a divalent metal cation</name>
        <dbReference type="ChEBI" id="CHEBI:60240"/>
    </ligand>
</feature>
<feature type="binding site" evidence="1">
    <location>
        <position position="12"/>
    </location>
    <ligand>
        <name>a divalent metal cation</name>
        <dbReference type="ChEBI" id="CHEBI:60240"/>
    </ligand>
</feature>
<feature type="binding site" evidence="1">
    <location>
        <begin position="36"/>
        <end position="37"/>
    </location>
    <ligand>
        <name>4-CDP-2-C-methyl-D-erythritol 2-phosphate</name>
        <dbReference type="ChEBI" id="CHEBI:57919"/>
    </ligand>
</feature>
<feature type="binding site" evidence="1">
    <location>
        <position position="44"/>
    </location>
    <ligand>
        <name>a divalent metal cation</name>
        <dbReference type="ChEBI" id="CHEBI:60240"/>
    </ligand>
</feature>
<feature type="binding site" evidence="1">
    <location>
        <begin position="58"/>
        <end position="60"/>
    </location>
    <ligand>
        <name>4-CDP-2-C-methyl-D-erythritol 2-phosphate</name>
        <dbReference type="ChEBI" id="CHEBI:57919"/>
    </ligand>
</feature>
<feature type="binding site" evidence="1">
    <location>
        <begin position="63"/>
        <end position="67"/>
    </location>
    <ligand>
        <name>4-CDP-2-C-methyl-D-erythritol 2-phosphate</name>
        <dbReference type="ChEBI" id="CHEBI:57919"/>
    </ligand>
</feature>
<feature type="binding site" evidence="1">
    <location>
        <position position="144"/>
    </location>
    <ligand>
        <name>4-CDP-2-C-methyl-D-erythritol 2-phosphate</name>
        <dbReference type="ChEBI" id="CHEBI:57919"/>
    </ligand>
</feature>
<feature type="site" description="Transition state stabilizer" evidence="1">
    <location>
        <position position="36"/>
    </location>
</feature>
<feature type="site" description="Transition state stabilizer" evidence="1">
    <location>
        <position position="135"/>
    </location>
</feature>
<comment type="function">
    <text evidence="1">Involved in the biosynthesis of isopentenyl diphosphate (IPP) and dimethylallyl diphosphate (DMAPP), two major building blocks of isoprenoid compounds. Catalyzes the conversion of 4-diphosphocytidyl-2-C-methyl-D-erythritol 2-phosphate (CDP-ME2P) to 2-C-methyl-D-erythritol 2,4-cyclodiphosphate (ME-CPP) with a corresponding release of cytidine 5-monophosphate (CMP).</text>
</comment>
<comment type="catalytic activity">
    <reaction evidence="1">
        <text>4-CDP-2-C-methyl-D-erythritol 2-phosphate = 2-C-methyl-D-erythritol 2,4-cyclic diphosphate + CMP</text>
        <dbReference type="Rhea" id="RHEA:23864"/>
        <dbReference type="ChEBI" id="CHEBI:57919"/>
        <dbReference type="ChEBI" id="CHEBI:58483"/>
        <dbReference type="ChEBI" id="CHEBI:60377"/>
        <dbReference type="EC" id="4.6.1.12"/>
    </reaction>
</comment>
<comment type="cofactor">
    <cofactor evidence="1">
        <name>a divalent metal cation</name>
        <dbReference type="ChEBI" id="CHEBI:60240"/>
    </cofactor>
    <text evidence="1">Binds 1 divalent metal cation per subunit.</text>
</comment>
<comment type="pathway">
    <text evidence="1">Isoprenoid biosynthesis; isopentenyl diphosphate biosynthesis via DXP pathway; isopentenyl diphosphate from 1-deoxy-D-xylulose 5-phosphate: step 4/6.</text>
</comment>
<comment type="subunit">
    <text evidence="1">Homotrimer.</text>
</comment>
<comment type="similarity">
    <text evidence="1">Belongs to the IspF family.</text>
</comment>
<evidence type="ECO:0000255" key="1">
    <source>
        <dbReference type="HAMAP-Rule" id="MF_00107"/>
    </source>
</evidence>
<reference key="1">
    <citation type="journal article" date="2009" name="BMC Genomics">
        <title>Metabolic analysis of the soil microbe Dechloromonas aromatica str. RCB: indications of a surprisingly complex life-style and cryptic anaerobic pathways for aromatic degradation.</title>
        <authorList>
            <person name="Salinero K.K."/>
            <person name="Keller K."/>
            <person name="Feil W.S."/>
            <person name="Feil H."/>
            <person name="Trong S."/>
            <person name="Di Bartolo G."/>
            <person name="Lapidus A."/>
        </authorList>
    </citation>
    <scope>NUCLEOTIDE SEQUENCE [LARGE SCALE GENOMIC DNA]</scope>
    <source>
        <strain>RCB</strain>
    </source>
</reference>
<protein>
    <recommendedName>
        <fullName evidence="1">2-C-methyl-D-erythritol 2,4-cyclodiphosphate synthase</fullName>
        <shortName evidence="1">MECDP-synthase</shortName>
        <shortName evidence="1">MECPP-synthase</shortName>
        <shortName evidence="1">MECPS</shortName>
        <ecNumber evidence="1">4.6.1.12</ecNumber>
    </recommendedName>
</protein>